<feature type="chain" id="PRO_0000422063" description="F-box protein MAX2 homolog A">
    <location>
        <begin position="1"/>
        <end position="708"/>
    </location>
</feature>
<feature type="domain" description="F-box" evidence="3">
    <location>
        <begin position="2"/>
        <end position="49"/>
    </location>
</feature>
<accession>I1SSI5</accession>
<keyword id="KW-0539">Nucleus</keyword>
<keyword id="KW-0833">Ubl conjugation pathway</keyword>
<name>MAX2A_PETHY</name>
<evidence type="ECO:0000250" key="1"/>
<evidence type="ECO:0000250" key="2">
    <source>
        <dbReference type="UniProtKB" id="Q9SIM9"/>
    </source>
</evidence>
<evidence type="ECO:0000255" key="3"/>
<evidence type="ECO:0000269" key="4">
    <source>
    </source>
</evidence>
<evidence type="ECO:0000269" key="5">
    <source>
    </source>
</evidence>
<evidence type="ECO:0000269" key="6">
    <source>
    </source>
</evidence>
<evidence type="ECO:0000303" key="7">
    <source>
    </source>
</evidence>
<evidence type="ECO:0000303" key="8">
    <source>
    </source>
</evidence>
<evidence type="ECO:0000305" key="9">
    <source>
    </source>
</evidence>
<sequence>MATQLNDLPDVILSNIIAAVTDVRSRNSTSFVCRKWLVLERSTRVSLTLRGNVRDLFMLPTCFRSITHLDLSLISPWGHPLLSPTTPDPSLTAHLLHHAFPFVTSLVVYTRHPFTLQLLPPLWPQLKQIKLVRWHQRPQLATGDEFNMLFENCPNLSSLDLSTFYCWTDDIPTALVSHPMVASNLVTLNLLNPCFSEGFKTDEIKAITLACPNLKEFRVVCMFDPRYIGFVGDEGLVAVATNCPKLSTLHLADTSALSNSRGDINDDGFTQEDAKFGVSTLIEVFSGLPLLEELVLDVCNNVRDTGPALEILNKKCPRLRSLKLGQFHGISMPVESKLDGVALCQGLESLSIRNVGDLNDMGLIAIGRGCSRLAKFEVQGCKKITVRGMRTLASLLKKTLIDVKISCCKNLGAAYSLKALEPIQNRIQKLHIDCVWDSVEEFENLDGYGYGFDLNRRDGCEASSNFGDTFGCEEDAYLFKEKKRCKFSYDLNSLYEEVNGHGNGYSGRSWDRLQYLSLWIGVGDLLTPLTAAGLEDCPNLEEIKIRVEGDCRLWSKHSEQAFGLSTLLHYPKLSKMHLDCGDTIGYAHTAPSGQVDLSLWERFYLLGIGTLSLTELDYWPPQDMDVNQRCLSLPAAGLLQECLTLRKLFIHGTAHEHFMMFLLRIPNLRDVQLREDYYPAPENDMSTEMRADSLSRFEAALNRRPISD</sequence>
<organism>
    <name type="scientific">Petunia hybrida</name>
    <name type="common">Petunia</name>
    <dbReference type="NCBI Taxonomy" id="4102"/>
    <lineage>
        <taxon>Eukaryota</taxon>
        <taxon>Viridiplantae</taxon>
        <taxon>Streptophyta</taxon>
        <taxon>Embryophyta</taxon>
        <taxon>Tracheophyta</taxon>
        <taxon>Spermatophyta</taxon>
        <taxon>Magnoliopsida</taxon>
        <taxon>eudicotyledons</taxon>
        <taxon>Gunneridae</taxon>
        <taxon>Pentapetalae</taxon>
        <taxon>asterids</taxon>
        <taxon>lamiids</taxon>
        <taxon>Solanales</taxon>
        <taxon>Solanaceae</taxon>
        <taxon>Petunioideae</taxon>
        <taxon>Petunia</taxon>
    </lineage>
</organism>
<protein>
    <recommendedName>
        <fullName evidence="7 8">F-box protein MAX2 homolog A</fullName>
        <shortName evidence="7 8">PhMAX2A</shortName>
    </recommendedName>
</protein>
<dbReference type="EMBL" id="HM117629">
    <property type="protein sequence ID" value="AEB97384.1"/>
    <property type="molecule type" value="Genomic_DNA"/>
</dbReference>
<dbReference type="SMR" id="I1SSI5"/>
<dbReference type="GO" id="GO:0005634">
    <property type="term" value="C:nucleus"/>
    <property type="evidence" value="ECO:0000314"/>
    <property type="project" value="UniProtKB"/>
</dbReference>
<dbReference type="GO" id="GO:0019005">
    <property type="term" value="C:SCF ubiquitin ligase complex"/>
    <property type="evidence" value="ECO:0007669"/>
    <property type="project" value="TreeGrafter"/>
</dbReference>
<dbReference type="GO" id="GO:0031146">
    <property type="term" value="P:SCF-dependent proteasomal ubiquitin-dependent protein catabolic process"/>
    <property type="evidence" value="ECO:0007669"/>
    <property type="project" value="TreeGrafter"/>
</dbReference>
<dbReference type="CDD" id="cd22159">
    <property type="entry name" value="F-box_AtTIR1-like"/>
    <property type="match status" value="1"/>
</dbReference>
<dbReference type="Gene3D" id="3.80.10.10">
    <property type="entry name" value="Ribonuclease Inhibitor"/>
    <property type="match status" value="1"/>
</dbReference>
<dbReference type="InterPro" id="IPR041567">
    <property type="entry name" value="COI1_F-box"/>
</dbReference>
<dbReference type="InterPro" id="IPR006553">
    <property type="entry name" value="Leu-rich_rpt_Cys-con_subtyp"/>
</dbReference>
<dbReference type="InterPro" id="IPR032675">
    <property type="entry name" value="LRR_dom_sf"/>
</dbReference>
<dbReference type="PANTHER" id="PTHR13318:SF148">
    <property type="entry name" value="F-BOX PROTEIN MAX2"/>
    <property type="match status" value="1"/>
</dbReference>
<dbReference type="PANTHER" id="PTHR13318">
    <property type="entry name" value="PARTNER OF PAIRED, ISOFORM B-RELATED"/>
    <property type="match status" value="1"/>
</dbReference>
<dbReference type="Pfam" id="PF18511">
    <property type="entry name" value="F-box_5"/>
    <property type="match status" value="1"/>
</dbReference>
<dbReference type="SMART" id="SM00367">
    <property type="entry name" value="LRR_CC"/>
    <property type="match status" value="3"/>
</dbReference>
<dbReference type="SUPFAM" id="SSF52047">
    <property type="entry name" value="RNI-like"/>
    <property type="match status" value="1"/>
</dbReference>
<reference key="1">
    <citation type="journal article" date="2011" name="Front. Plant Sci.">
        <title>The expression of Petunia strigolactone pathway genes is altered as part of the endogenous developmental program.</title>
        <authorList>
            <person name="Drummond R.S.M."/>
            <person name="Sheehan H."/>
            <person name="Simons J.L."/>
            <person name="Martinez-Sanchez N.M."/>
            <person name="Turner R.M."/>
            <person name="Putterill J."/>
            <person name="Snowden K.C."/>
        </authorList>
    </citation>
    <scope>NUCLEOTIDE SEQUENCE [GENOMIC DNA]</scope>
    <scope>TISSUE SPECIFICITY</scope>
    <scope>DISRUPTION PHENOTYPE</scope>
    <scope>DEVELOPMENTAL STAGE</scope>
    <source>
        <strain>cv. Violet 26</strain>
    </source>
</reference>
<reference key="2">
    <citation type="journal article" date="2012" name="Curr. Biol.">
        <title>DAD2 is an alpha/beta hydrolase likely to be involved in the perception of the plant branching hormone, strigolactone.</title>
        <authorList>
            <person name="Hamiaux C."/>
            <person name="Drummond R.S."/>
            <person name="Janssen B.J."/>
            <person name="Ledger S.E."/>
            <person name="Cooney J.M."/>
            <person name="Newcomb R.D."/>
            <person name="Snowden K.C."/>
        </authorList>
    </citation>
    <scope>INTERACTION WITH DAD2</scope>
</reference>
<reference key="3">
    <citation type="journal article" date="2024" name="Science">
        <title>Volatile communication in plants relies on a KAI2-mediated signaling pathway.</title>
        <authorList>
            <person name="Stirling S.A."/>
            <person name="Guercio A.M."/>
            <person name="Partrick R.M."/>
            <person name="Huang X.-Q."/>
            <person name="Bergman M.E."/>
            <person name="Dwivedi V."/>
            <person name="Kortbeek R.W.J."/>
            <person name="Liu Y.-K."/>
            <person name="Sun F."/>
            <person name="Tao W.A."/>
            <person name="Li Y."/>
            <person name="Boachon B."/>
            <person name="Shabek N."/>
            <person name="Dudareva N."/>
        </authorList>
    </citation>
    <scope>FUNCTION</scope>
    <scope>TISSUE SPECIFICITY</scope>
    <scope>SUBCELLULAR LOCATION</scope>
    <scope>INTERACTION WITH KAI2IA</scope>
    <source>
        <strain>cv. Mitchell</strain>
    </source>
</reference>
<comment type="function">
    <text evidence="2 9">Component of SCF(ASK-cullin-F-box) E3 ubiquitin ligase complexes, which may mediate the ubiquitination and subsequent proteasomal degradation of target proteins (By similarity). Is necessary for responses to strigolactones and may be involved in the ubiquitin-mediated degradation of specific proteins that activate axillary growth (By similarity). Targets probably SMAX1A to degradation upon the formation of an E3 SCF ubiquitin ligase complex (ASK-cullin-F-box) containing MAX2A and KAI2IA in response to (-)-germacrene D in the stigma (Probable).</text>
</comment>
<comment type="subunit">
    <text evidence="1 2 5 6">Part of a putative SCF (SKP1/Cullin/F-box) ubiquitin ligase complex (By similarity). Interacts with DAD2 (PubMed:22959345). Interacts with KAI2IA in the presence of (-)-germacrene D (PubMed:38513014).</text>
</comment>
<comment type="subcellular location">
    <subcellularLocation>
        <location evidence="6">Nucleus</location>
    </subcellularLocation>
</comment>
<comment type="tissue specificity">
    <text evidence="4">Mainly expressed in fully expanded leaves, lateral roots, axillary and shoot apex, and, to a lower extent, in internodes and nodes.</text>
</comment>
<comment type="developmental stage">
    <text evidence="4">Accumulates progressively during organs aging, including roots (main and lateral), stems and leaves.</text>
</comment>
<comment type="disruption phenotype">
    <text evidence="4">Increased shoot branching.</text>
</comment>
<proteinExistence type="evidence at protein level"/>
<gene>
    <name evidence="7 8" type="primary">MAX2A</name>
</gene>